<protein>
    <recommendedName>
        <fullName>Cold shock protein YdfK</fullName>
    </recommendedName>
</protein>
<accession>P76154</accession>
<accession>Q2MB92</accession>
<proteinExistence type="evidence at transcript level"/>
<name>YDFK_ECOLI</name>
<organism>
    <name type="scientific">Escherichia coli (strain K12)</name>
    <dbReference type="NCBI Taxonomy" id="83333"/>
    <lineage>
        <taxon>Bacteria</taxon>
        <taxon>Pseudomonadati</taxon>
        <taxon>Pseudomonadota</taxon>
        <taxon>Gammaproteobacteria</taxon>
        <taxon>Enterobacterales</taxon>
        <taxon>Enterobacteriaceae</taxon>
        <taxon>Escherichia</taxon>
    </lineage>
</organism>
<reference key="1">
    <citation type="journal article" date="1997" name="Science">
        <title>The complete genome sequence of Escherichia coli K-12.</title>
        <authorList>
            <person name="Blattner F.R."/>
            <person name="Plunkett G. III"/>
            <person name="Bloch C.A."/>
            <person name="Perna N.T."/>
            <person name="Burland V."/>
            <person name="Riley M."/>
            <person name="Collado-Vides J."/>
            <person name="Glasner J.D."/>
            <person name="Rode C.K."/>
            <person name="Mayhew G.F."/>
            <person name="Gregor J."/>
            <person name="Davis N.W."/>
            <person name="Kirkpatrick H.A."/>
            <person name="Goeden M.A."/>
            <person name="Rose D.J."/>
            <person name="Mau B."/>
            <person name="Shao Y."/>
        </authorList>
    </citation>
    <scope>NUCLEOTIDE SEQUENCE [LARGE SCALE GENOMIC DNA]</scope>
    <source>
        <strain>K12 / MG1655 / ATCC 47076</strain>
    </source>
</reference>
<reference key="2">
    <citation type="journal article" date="2006" name="Mol. Syst. Biol.">
        <title>Highly accurate genome sequences of Escherichia coli K-12 strains MG1655 and W3110.</title>
        <authorList>
            <person name="Hayashi K."/>
            <person name="Morooka N."/>
            <person name="Yamamoto Y."/>
            <person name="Fujita K."/>
            <person name="Isono K."/>
            <person name="Choi S."/>
            <person name="Ohtsubo E."/>
            <person name="Baba T."/>
            <person name="Wanner B.L."/>
            <person name="Mori H."/>
            <person name="Horiuchi T."/>
        </authorList>
    </citation>
    <scope>NUCLEOTIDE SEQUENCE [LARGE SCALE GENOMIC DNA]</scope>
    <source>
        <strain>K12 / W3110 / ATCC 27325 / DSM 5911</strain>
    </source>
</reference>
<reference key="3">
    <citation type="journal article" date="2003" name="Res. Microbiol.">
        <title>Changes in Escherichia coli transcriptome during acclimatization at low temperature.</title>
        <authorList>
            <person name="Polissi A."/>
            <person name="De Laurentis W."/>
            <person name="Zangrossi S."/>
            <person name="Briani F."/>
            <person name="Longhi V."/>
            <person name="Pesole G."/>
            <person name="Deho G."/>
        </authorList>
    </citation>
    <scope>INDUCTION</scope>
    <source>
        <strain>K12 / MG1655 / ATCC 47076</strain>
    </source>
</reference>
<reference key="4">
    <citation type="journal article" date="2011" name="J. Bacteriol.">
        <title>Genome-wide identification of transcription start sites yields a novel thermosensing RNA and new cyclic AMP receptor protein-regulated genes in Escherichia coli.</title>
        <authorList>
            <person name="Raghavan R."/>
            <person name="Sage A."/>
            <person name="Ochman H."/>
        </authorList>
    </citation>
    <scope>INDUCTION</scope>
    <scope>IDENTIFICATION OF PROBABLE TRANSLATIONAL START</scope>
    <source>
        <strain>K12 / MG1655 / ATCC 47076</strain>
    </source>
</reference>
<evidence type="ECO:0000269" key="1">
    <source>
    </source>
</evidence>
<evidence type="ECO:0000269" key="2">
    <source>
    </source>
</evidence>
<evidence type="ECO:0000305" key="3"/>
<feature type="chain" id="PRO_0000168957" description="Cold shock protein YdfK">
    <location>
        <begin position="1"/>
        <end position="77"/>
    </location>
</feature>
<keyword id="KW-1185">Reference proteome</keyword>
<dbReference type="EMBL" id="U00096">
    <property type="protein sequence ID" value="AAC74617.2"/>
    <property type="molecule type" value="Genomic_DNA"/>
</dbReference>
<dbReference type="EMBL" id="AP009048">
    <property type="protein sequence ID" value="BAE76464.1"/>
    <property type="status" value="ALT_INIT"/>
    <property type="molecule type" value="Genomic_DNA"/>
</dbReference>
<dbReference type="PIR" id="C64909">
    <property type="entry name" value="C64909"/>
</dbReference>
<dbReference type="RefSeq" id="NP_416062.2">
    <property type="nucleotide sequence ID" value="NC_000913.3"/>
</dbReference>
<dbReference type="RefSeq" id="WP_000836768.1">
    <property type="nucleotide sequence ID" value="NZ_SSUU01000015.1"/>
</dbReference>
<dbReference type="SMR" id="P76154"/>
<dbReference type="BioGRID" id="4260216">
    <property type="interactions" value="26"/>
</dbReference>
<dbReference type="FunCoup" id="P76154">
    <property type="interactions" value="140"/>
</dbReference>
<dbReference type="IntAct" id="P76154">
    <property type="interactions" value="22"/>
</dbReference>
<dbReference type="STRING" id="511145.b1544"/>
<dbReference type="PaxDb" id="511145-b1544"/>
<dbReference type="EnsemblBacteria" id="AAC74617">
    <property type="protein sequence ID" value="AAC74617"/>
    <property type="gene ID" value="b1544"/>
</dbReference>
<dbReference type="GeneID" id="86859712"/>
<dbReference type="GeneID" id="947451"/>
<dbReference type="KEGG" id="ecj:JW1537"/>
<dbReference type="KEGG" id="eco:b1544"/>
<dbReference type="KEGG" id="ecoc:C3026_08915"/>
<dbReference type="PATRIC" id="fig|511145.12.peg.1614"/>
<dbReference type="EchoBASE" id="EB3584"/>
<dbReference type="eggNOG" id="ENOG503303D">
    <property type="taxonomic scope" value="Bacteria"/>
</dbReference>
<dbReference type="HOGENOM" id="CLU_2367798_0_0_6"/>
<dbReference type="InParanoid" id="P76154"/>
<dbReference type="OrthoDB" id="6556103at2"/>
<dbReference type="BioCyc" id="EcoCyc:G6818-MONOMER"/>
<dbReference type="PRO" id="PR:P76154"/>
<dbReference type="Proteomes" id="UP000000625">
    <property type="component" value="Chromosome"/>
</dbReference>
<dbReference type="GO" id="GO:0009409">
    <property type="term" value="P:response to cold"/>
    <property type="evidence" value="ECO:0000270"/>
    <property type="project" value="EcoCyc"/>
</dbReference>
<gene>
    <name type="primary">ydfK</name>
    <name type="ordered locus">b1544</name>
    <name type="ordered locus">JW1537</name>
</gene>
<comment type="induction">
    <text evidence="1 2">By cold shock, up to 70-fold at 10 degrees Celsius.</text>
</comment>
<comment type="similarity">
    <text evidence="3">To E.coli YnaE.</text>
</comment>
<comment type="sequence caution" evidence="3">
    <conflict type="erroneous initiation">
        <sequence resource="EMBL-CDS" id="BAE76464"/>
    </conflict>
    <text>Extended N-terminus.</text>
</comment>
<sequence>MKSKDTLKWFPAQLPEVRIILGDAVVEVAKQGRPINTRTLLDYIEGNIKKKSWLDNKELLQTAISVLKDNQNLNGKM</sequence>